<gene>
    <name type="primary">Su(var)3-7</name>
    <name type="synonym">Suvar(3)7</name>
    <name type="ORF">CG8599</name>
</gene>
<proteinExistence type="evidence at protein level"/>
<organism>
    <name type="scientific">Drosophila melanogaster</name>
    <name type="common">Fruit fly</name>
    <dbReference type="NCBI Taxonomy" id="7227"/>
    <lineage>
        <taxon>Eukaryota</taxon>
        <taxon>Metazoa</taxon>
        <taxon>Ecdysozoa</taxon>
        <taxon>Arthropoda</taxon>
        <taxon>Hexapoda</taxon>
        <taxon>Insecta</taxon>
        <taxon>Pterygota</taxon>
        <taxon>Neoptera</taxon>
        <taxon>Endopterygota</taxon>
        <taxon>Diptera</taxon>
        <taxon>Brachycera</taxon>
        <taxon>Muscomorpha</taxon>
        <taxon>Ephydroidea</taxon>
        <taxon>Drosophilidae</taxon>
        <taxon>Drosophila</taxon>
        <taxon>Sophophora</taxon>
    </lineage>
</organism>
<keyword id="KW-0238">DNA-binding</keyword>
<keyword id="KW-0479">Metal-binding</keyword>
<keyword id="KW-0539">Nucleus</keyword>
<keyword id="KW-0597">Phosphoprotein</keyword>
<keyword id="KW-1185">Reference proteome</keyword>
<keyword id="KW-0677">Repeat</keyword>
<keyword id="KW-0862">Zinc</keyword>
<keyword id="KW-0863">Zinc-finger</keyword>
<protein>
    <recommendedName>
        <fullName>Protein suppressor of variegation 3-7</fullName>
    </recommendedName>
</protein>
<evidence type="ECO:0000255" key="1">
    <source>
        <dbReference type="PROSITE-ProRule" id="PRU00371"/>
    </source>
</evidence>
<evidence type="ECO:0000256" key="2">
    <source>
        <dbReference type="SAM" id="MobiDB-lite"/>
    </source>
</evidence>
<evidence type="ECO:0000269" key="3">
    <source>
    </source>
</evidence>
<evidence type="ECO:0000269" key="4">
    <source>
    </source>
</evidence>
<evidence type="ECO:0000305" key="5"/>
<name>SUV37_DROME</name>
<feature type="chain" id="PRO_0000047060" description="Protein suppressor of variegation 3-7">
    <location>
        <begin position="1"/>
        <end position="1250"/>
    </location>
</feature>
<feature type="domain" description="BESS" evidence="1">
    <location>
        <begin position="987"/>
        <end position="1026"/>
    </location>
</feature>
<feature type="zinc finger region" description="C2H2-type 1">
    <location>
        <begin position="217"/>
        <end position="236"/>
    </location>
</feature>
<feature type="zinc finger region" description="C2H2-type 2">
    <location>
        <begin position="319"/>
        <end position="343"/>
    </location>
</feature>
<feature type="zinc finger region" description="C2H2-type 3">
    <location>
        <begin position="425"/>
        <end position="446"/>
    </location>
</feature>
<feature type="zinc finger region" description="C2H2-type 4">
    <location>
        <begin position="487"/>
        <end position="512"/>
    </location>
</feature>
<feature type="zinc finger region" description="C2H2-type 5">
    <location>
        <begin position="605"/>
        <end position="629"/>
    </location>
</feature>
<feature type="zinc finger region" description="C2H2-type 6">
    <location>
        <begin position="737"/>
        <end position="761"/>
    </location>
</feature>
<feature type="zinc finger region" description="C2H2-type 7">
    <location>
        <begin position="829"/>
        <end position="852"/>
    </location>
</feature>
<feature type="region of interest" description="Disordered" evidence="2">
    <location>
        <begin position="107"/>
        <end position="148"/>
    </location>
</feature>
<feature type="region of interest" description="Disordered" evidence="2">
    <location>
        <begin position="160"/>
        <end position="186"/>
    </location>
</feature>
<feature type="region of interest" description="Disordered" evidence="2">
    <location>
        <begin position="343"/>
        <end position="398"/>
    </location>
</feature>
<feature type="region of interest" description="Disordered" evidence="2">
    <location>
        <begin position="525"/>
        <end position="564"/>
    </location>
</feature>
<feature type="region of interest" description="Disordered" evidence="2">
    <location>
        <begin position="642"/>
        <end position="684"/>
    </location>
</feature>
<feature type="region of interest" description="Disordered" evidence="2">
    <location>
        <begin position="851"/>
        <end position="915"/>
    </location>
</feature>
<feature type="region of interest" description="Disordered" evidence="2">
    <location>
        <begin position="1032"/>
        <end position="1060"/>
    </location>
</feature>
<feature type="region of interest" description="Disordered" evidence="2">
    <location>
        <begin position="1079"/>
        <end position="1116"/>
    </location>
</feature>
<feature type="region of interest" description="Disordered" evidence="2">
    <location>
        <begin position="1154"/>
        <end position="1180"/>
    </location>
</feature>
<feature type="region of interest" description="Disordered" evidence="2">
    <location>
        <begin position="1205"/>
        <end position="1236"/>
    </location>
</feature>
<feature type="compositionally biased region" description="Polar residues" evidence="2">
    <location>
        <begin position="132"/>
        <end position="141"/>
    </location>
</feature>
<feature type="compositionally biased region" description="Acidic residues" evidence="2">
    <location>
        <begin position="164"/>
        <end position="175"/>
    </location>
</feature>
<feature type="compositionally biased region" description="Basic and acidic residues" evidence="2">
    <location>
        <begin position="343"/>
        <end position="354"/>
    </location>
</feature>
<feature type="compositionally biased region" description="Low complexity" evidence="2">
    <location>
        <begin position="543"/>
        <end position="552"/>
    </location>
</feature>
<feature type="compositionally biased region" description="Acidic residues" evidence="2">
    <location>
        <begin position="553"/>
        <end position="563"/>
    </location>
</feature>
<feature type="compositionally biased region" description="Acidic residues" evidence="2">
    <location>
        <begin position="657"/>
        <end position="679"/>
    </location>
</feature>
<feature type="compositionally biased region" description="Basic and acidic residues" evidence="2">
    <location>
        <begin position="851"/>
        <end position="860"/>
    </location>
</feature>
<feature type="compositionally biased region" description="Basic and acidic residues" evidence="2">
    <location>
        <begin position="879"/>
        <end position="897"/>
    </location>
</feature>
<feature type="compositionally biased region" description="Low complexity" evidence="2">
    <location>
        <begin position="1032"/>
        <end position="1055"/>
    </location>
</feature>
<feature type="compositionally biased region" description="Polar residues" evidence="2">
    <location>
        <begin position="1079"/>
        <end position="1091"/>
    </location>
</feature>
<feature type="compositionally biased region" description="Polar residues" evidence="2">
    <location>
        <begin position="1104"/>
        <end position="1114"/>
    </location>
</feature>
<feature type="compositionally biased region" description="Low complexity" evidence="2">
    <location>
        <begin position="1206"/>
        <end position="1224"/>
    </location>
</feature>
<feature type="modified residue" description="Phosphoserine" evidence="4">
    <location>
        <position position="165"/>
    </location>
</feature>
<feature type="modified residue" description="Phosphoserine" evidence="4">
    <location>
        <position position="175"/>
    </location>
</feature>
<feature type="modified residue" description="Phosphoserine" evidence="4">
    <location>
        <position position="176"/>
    </location>
</feature>
<feature type="modified residue" description="Phosphoserine" evidence="4">
    <location>
        <position position="871"/>
    </location>
</feature>
<feature type="modified residue" description="Phosphoserine" evidence="4">
    <location>
        <position position="873"/>
    </location>
</feature>
<feature type="modified residue" description="Phosphoserine" evidence="4">
    <location>
        <position position="975"/>
    </location>
</feature>
<feature type="sequence conflict" description="In Ref. 1; CAA36434." evidence="5" ref="1">
    <original>IE</original>
    <variation>MQ</variation>
    <location>
        <begin position="53"/>
        <end position="54"/>
    </location>
</feature>
<feature type="sequence conflict" description="In Ref. 1; CAA36434." evidence="5" ref="1">
    <original>D</original>
    <variation>S</variation>
    <location>
        <position position="265"/>
    </location>
</feature>
<feature type="sequence conflict" description="In Ref. 1; CAA36434." evidence="5" ref="1">
    <original>V</original>
    <variation>A</variation>
    <location>
        <position position="385"/>
    </location>
</feature>
<feature type="sequence conflict" description="In Ref. 1; CAA36434." evidence="5" ref="1">
    <original>D</original>
    <variation>N</variation>
    <location>
        <position position="943"/>
    </location>
</feature>
<feature type="sequence conflict" description="In Ref. 1; CAA36434." evidence="5" ref="1">
    <original>L</original>
    <variation>V</variation>
    <location>
        <position position="1148"/>
    </location>
</feature>
<feature type="sequence conflict" description="In Ref. 1; CAA36434." evidence="5" ref="1">
    <original>V</original>
    <variation>A</variation>
    <location>
        <position position="1159"/>
    </location>
</feature>
<feature type="sequence conflict" description="In Ref. 1; CAA36434." evidence="5" ref="1">
    <original>V</original>
    <variation>A</variation>
    <location>
        <position position="1193"/>
    </location>
</feature>
<dbReference type="EMBL" id="X52187">
    <property type="protein sequence ID" value="CAA36434.1"/>
    <property type="status" value="ALT_FRAME"/>
    <property type="molecule type" value="mRNA"/>
</dbReference>
<dbReference type="EMBL" id="AE014297">
    <property type="protein sequence ID" value="AAF54918.2"/>
    <property type="molecule type" value="Genomic_DNA"/>
</dbReference>
<dbReference type="PIR" id="S09151">
    <property type="entry name" value="S09151"/>
</dbReference>
<dbReference type="RefSeq" id="NP_524342.3">
    <property type="nucleotide sequence ID" value="NM_079618.4"/>
</dbReference>
<dbReference type="BioGRID" id="66711">
    <property type="interactions" value="10"/>
</dbReference>
<dbReference type="ELM" id="P20193"/>
<dbReference type="FunCoup" id="P20193">
    <property type="interactions" value="398"/>
</dbReference>
<dbReference type="IntAct" id="P20193">
    <property type="interactions" value="4"/>
</dbReference>
<dbReference type="STRING" id="7227.FBpp0082204"/>
<dbReference type="GlyGen" id="P20193">
    <property type="glycosylation" value="1 site"/>
</dbReference>
<dbReference type="iPTMnet" id="P20193"/>
<dbReference type="PaxDb" id="7227-FBpp0082204"/>
<dbReference type="EnsemblMetazoa" id="FBtr0082736">
    <property type="protein sequence ID" value="FBpp0082204"/>
    <property type="gene ID" value="FBgn0003598"/>
</dbReference>
<dbReference type="GeneID" id="41627"/>
<dbReference type="KEGG" id="dme:Dmel_CG8599"/>
<dbReference type="AGR" id="FB:FBgn0003598"/>
<dbReference type="CTD" id="41627"/>
<dbReference type="FlyBase" id="FBgn0003598">
    <property type="gene designation" value="Su(var)3-7"/>
</dbReference>
<dbReference type="VEuPathDB" id="VectorBase:FBgn0003598"/>
<dbReference type="eggNOG" id="ENOG502T8X0">
    <property type="taxonomic scope" value="Eukaryota"/>
</dbReference>
<dbReference type="InParanoid" id="P20193"/>
<dbReference type="OMA" id="DTSPQQC"/>
<dbReference type="OrthoDB" id="10262320at2759"/>
<dbReference type="PhylomeDB" id="P20193"/>
<dbReference type="SignaLink" id="P20193"/>
<dbReference type="BioGRID-ORCS" id="41627">
    <property type="hits" value="0 hits in 1 CRISPR screen"/>
</dbReference>
<dbReference type="ChiTaRS" id="Su(var)3-7">
    <property type="organism name" value="fly"/>
</dbReference>
<dbReference type="GenomeRNAi" id="41627"/>
<dbReference type="PRO" id="PR:P20193"/>
<dbReference type="Proteomes" id="UP000000803">
    <property type="component" value="Chromosome 3R"/>
</dbReference>
<dbReference type="Bgee" id="FBgn0003598">
    <property type="expression patterns" value="Expressed in adult abdominal pericardial cell (Drosophila) in dorsal vessel heart and 144 other cell types or tissues"/>
</dbReference>
<dbReference type="ExpressionAtlas" id="P20193">
    <property type="expression patterns" value="baseline and differential"/>
</dbReference>
<dbReference type="GO" id="GO:0005737">
    <property type="term" value="C:cytoplasm"/>
    <property type="evidence" value="ECO:0000318"/>
    <property type="project" value="GO_Central"/>
</dbReference>
<dbReference type="GO" id="GO:0000792">
    <property type="term" value="C:heterochromatin"/>
    <property type="evidence" value="ECO:0000314"/>
    <property type="project" value="FlyBase"/>
</dbReference>
<dbReference type="GO" id="GO:0005634">
    <property type="term" value="C:nucleus"/>
    <property type="evidence" value="ECO:0000314"/>
    <property type="project" value="FlyBase"/>
</dbReference>
<dbReference type="GO" id="GO:0005721">
    <property type="term" value="C:pericentric heterochromatin"/>
    <property type="evidence" value="ECO:0000314"/>
    <property type="project" value="FlyBase"/>
</dbReference>
<dbReference type="GO" id="GO:0003682">
    <property type="term" value="F:chromatin binding"/>
    <property type="evidence" value="ECO:0000314"/>
    <property type="project" value="FlyBase"/>
</dbReference>
<dbReference type="GO" id="GO:0003677">
    <property type="term" value="F:DNA binding"/>
    <property type="evidence" value="ECO:0007669"/>
    <property type="project" value="UniProtKB-KW"/>
</dbReference>
<dbReference type="GO" id="GO:0008270">
    <property type="term" value="F:zinc ion binding"/>
    <property type="evidence" value="ECO:0007669"/>
    <property type="project" value="UniProtKB-KW"/>
</dbReference>
<dbReference type="GO" id="GO:0009047">
    <property type="term" value="P:dosage compensation by hyperactivation of X chromosome"/>
    <property type="evidence" value="ECO:0000315"/>
    <property type="project" value="FlyBase"/>
</dbReference>
<dbReference type="GO" id="GO:0031453">
    <property type="term" value="P:positive regulation of heterochromatin formation"/>
    <property type="evidence" value="ECO:0000316"/>
    <property type="project" value="FlyBase"/>
</dbReference>
<dbReference type="GO" id="GO:0090053">
    <property type="term" value="P:positive regulation of pericentric heterochromatin formation"/>
    <property type="evidence" value="ECO:0000315"/>
    <property type="project" value="FlyBase"/>
</dbReference>
<dbReference type="InterPro" id="IPR004210">
    <property type="entry name" value="BESS_motif"/>
</dbReference>
<dbReference type="InterPro" id="IPR051964">
    <property type="entry name" value="Chaperone_stress_response"/>
</dbReference>
<dbReference type="PANTHER" id="PTHR44029">
    <property type="entry name" value="DNAJ HOMOLOG SUBFAMILY C MEMBER 21"/>
    <property type="match status" value="1"/>
</dbReference>
<dbReference type="PANTHER" id="PTHR44029:SF1">
    <property type="entry name" value="DNAJ HOMOLOG SUBFAMILY C MEMBER 21"/>
    <property type="match status" value="1"/>
</dbReference>
<dbReference type="Pfam" id="PF02944">
    <property type="entry name" value="BESS"/>
    <property type="match status" value="1"/>
</dbReference>
<dbReference type="PROSITE" id="PS51031">
    <property type="entry name" value="BESS"/>
    <property type="match status" value="1"/>
</dbReference>
<dbReference type="PROSITE" id="PS00028">
    <property type="entry name" value="ZINC_FINGER_C2H2_1"/>
    <property type="match status" value="1"/>
</dbReference>
<sequence length="1250" mass="139990">MDRDSSMQAKNLDAQCNPDLKMASANSETLASATHELKIMDVEGGALVDPDHIEEVETSMVIVVDDDDGDVAMVVEEDKHPMRDDPCIEDIMDDEHAPLVAELQSALNNPDDKQASEDPLLEDQEREPDAMSTKTEPSSDAESSHSYHDPMGLLERIEIHDPGDSQDDDDEDDESSNGGGVDGGMRRKMPRAQRWLLWMKRWPWILHEDSDGTLAFCLYCNISINVNNRSRHIQQHNVSLSHQERECNYLAFKKSEEETRGAISDNEIKHEFGTKSYVAAMKQKRISETEAFNNFNWLRWLRWHPWLERSMPTGTIGTCRICSVRMNVEFVYLRKRHETTKGHMEALRNLDSDKRSRKRKRSKSNSVTNSGGDEAEREKESEPEVGPEDAQDTPVVMMNGDVDSGDDPGKWCALIPDTNPQQCRCTLCNCTMAITSFLRHCKTRAHCHMLSTPAEKGSSDIRGIWAVFADMHPWLIADPEDPSIGYCSVCRKRFMYGNSEIKRKNHEKSEKHTLALASAKAGIEVGSADGRGGDNMDEEEAAASDQAQSSQTDDSEDNDDDNWSEIQKLGKGFAHKSSSEPRKATVRAGVRFYPWLCYSKDRKTQICKFCRVRFHNEAAKARHELSARHVKLVKQFKMRQAKLHQGTNTQTKHNAQDDEESQEQDEEYGEEEEDAEEDSQSNFDLGTVQARKTARADNKLFVKPIPATMKGKVMVWKGRFPWLSYKKNEQRGNYAWCKLCEVSLYLPSSKWASKHQRTSRHIRLRIDRKRNGGNPLKTSNKNSGEISTVVATASALASAEARQKAAMAELQAKYDWLDPDANDENHCHCRVCDSRLPIKVFYLRQHDASRKHVENKERQRANAAAAANAPSVSPTSTVDAERQESGMDKESENDMSVRSDGSTAEPLAKRSRRSMEVRRIIRALRDSMGKRQEERSQMDMARDMICSSFDIVTRLRTLERESVAHNESMAQAPPSVTVSPIKPPEPRHVMDLFFDSISPTMKSLPPDLAAEGKSKIMQLVCSLELRAMQRNATTPTPATVSASSKWPSSTTVTPVKTPPAPISAPLASVDADLHSSVVTTPHEYNNGQNNNNDKETVPKEPVTGASSAQVTINGSAKDLPENIRRILTSNQTQVTNRLETDSVRCVPLDKLTTQSRTNVNGRLSQGGTSEAPSTPQADLSNGNTLAMIRQIRVNNNNSSKITVTNTPQMQQPQQAQASITSSTPIMRGGPSSNGCQITTFRTMVNHNRRP</sequence>
<comment type="function">
    <text>Dose-limiting factor in position-effect variegation, the inactivation in some cells of a gene translocated next to heterochromatin. It could play a role in chromosome condensation.</text>
</comment>
<comment type="subunit">
    <text evidence="3">Interacts with Su(var)39 through the BESS domain.</text>
</comment>
<comment type="subcellular location">
    <subcellularLocation>
        <location evidence="5">Nucleus</location>
    </subcellularLocation>
</comment>
<comment type="sequence caution" evidence="5">
    <conflict type="frameshift">
        <sequence resource="EMBL-CDS" id="CAA36434"/>
    </conflict>
</comment>
<accession>P20193</accession>
<accession>Q9VFX7</accession>
<reference key="1">
    <citation type="journal article" date="1995" name="Nucleic Acids Res.">
        <title>The modifier of position-effect variegation Suvar(3)7 of Drosophila: there are two alternative transcripts and seven scattered zinc fingers, each preceded by a tryptophan box.</title>
        <authorList>
            <person name="Cleard F."/>
            <person name="Matsarskaia M."/>
            <person name="Spierer P."/>
        </authorList>
    </citation>
    <scope>NUCLEOTIDE SEQUENCE [MRNA]</scope>
</reference>
<reference key="2">
    <citation type="journal article" date="1995" name="Nucleic Acids Res.">
        <authorList>
            <person name="Cleard F."/>
            <person name="Matsarskaia M."/>
            <person name="Spierer P."/>
        </authorList>
    </citation>
    <scope>ERRATUM OF PUBMED:7708496</scope>
</reference>
<reference key="3">
    <citation type="journal article" date="2000" name="Science">
        <title>The genome sequence of Drosophila melanogaster.</title>
        <authorList>
            <person name="Adams M.D."/>
            <person name="Celniker S.E."/>
            <person name="Holt R.A."/>
            <person name="Evans C.A."/>
            <person name="Gocayne J.D."/>
            <person name="Amanatides P.G."/>
            <person name="Scherer S.E."/>
            <person name="Li P.W."/>
            <person name="Hoskins R.A."/>
            <person name="Galle R.F."/>
            <person name="George R.A."/>
            <person name="Lewis S.E."/>
            <person name="Richards S."/>
            <person name="Ashburner M."/>
            <person name="Henderson S.N."/>
            <person name="Sutton G.G."/>
            <person name="Wortman J.R."/>
            <person name="Yandell M.D."/>
            <person name="Zhang Q."/>
            <person name="Chen L.X."/>
            <person name="Brandon R.C."/>
            <person name="Rogers Y.-H.C."/>
            <person name="Blazej R.G."/>
            <person name="Champe M."/>
            <person name="Pfeiffer B.D."/>
            <person name="Wan K.H."/>
            <person name="Doyle C."/>
            <person name="Baxter E.G."/>
            <person name="Helt G."/>
            <person name="Nelson C.R."/>
            <person name="Miklos G.L.G."/>
            <person name="Abril J.F."/>
            <person name="Agbayani A."/>
            <person name="An H.-J."/>
            <person name="Andrews-Pfannkoch C."/>
            <person name="Baldwin D."/>
            <person name="Ballew R.M."/>
            <person name="Basu A."/>
            <person name="Baxendale J."/>
            <person name="Bayraktaroglu L."/>
            <person name="Beasley E.M."/>
            <person name="Beeson K.Y."/>
            <person name="Benos P.V."/>
            <person name="Berman B.P."/>
            <person name="Bhandari D."/>
            <person name="Bolshakov S."/>
            <person name="Borkova D."/>
            <person name="Botchan M.R."/>
            <person name="Bouck J."/>
            <person name="Brokstein P."/>
            <person name="Brottier P."/>
            <person name="Burtis K.C."/>
            <person name="Busam D.A."/>
            <person name="Butler H."/>
            <person name="Cadieu E."/>
            <person name="Center A."/>
            <person name="Chandra I."/>
            <person name="Cherry J.M."/>
            <person name="Cawley S."/>
            <person name="Dahlke C."/>
            <person name="Davenport L.B."/>
            <person name="Davies P."/>
            <person name="de Pablos B."/>
            <person name="Delcher A."/>
            <person name="Deng Z."/>
            <person name="Mays A.D."/>
            <person name="Dew I."/>
            <person name="Dietz S.M."/>
            <person name="Dodson K."/>
            <person name="Doup L.E."/>
            <person name="Downes M."/>
            <person name="Dugan-Rocha S."/>
            <person name="Dunkov B.C."/>
            <person name="Dunn P."/>
            <person name="Durbin K.J."/>
            <person name="Evangelista C.C."/>
            <person name="Ferraz C."/>
            <person name="Ferriera S."/>
            <person name="Fleischmann W."/>
            <person name="Fosler C."/>
            <person name="Gabrielian A.E."/>
            <person name="Garg N.S."/>
            <person name="Gelbart W.M."/>
            <person name="Glasser K."/>
            <person name="Glodek A."/>
            <person name="Gong F."/>
            <person name="Gorrell J.H."/>
            <person name="Gu Z."/>
            <person name="Guan P."/>
            <person name="Harris M."/>
            <person name="Harris N.L."/>
            <person name="Harvey D.A."/>
            <person name="Heiman T.J."/>
            <person name="Hernandez J.R."/>
            <person name="Houck J."/>
            <person name="Hostin D."/>
            <person name="Houston K.A."/>
            <person name="Howland T.J."/>
            <person name="Wei M.-H."/>
            <person name="Ibegwam C."/>
            <person name="Jalali M."/>
            <person name="Kalush F."/>
            <person name="Karpen G.H."/>
            <person name="Ke Z."/>
            <person name="Kennison J.A."/>
            <person name="Ketchum K.A."/>
            <person name="Kimmel B.E."/>
            <person name="Kodira C.D."/>
            <person name="Kraft C.L."/>
            <person name="Kravitz S."/>
            <person name="Kulp D."/>
            <person name="Lai Z."/>
            <person name="Lasko P."/>
            <person name="Lei Y."/>
            <person name="Levitsky A.A."/>
            <person name="Li J.H."/>
            <person name="Li Z."/>
            <person name="Liang Y."/>
            <person name="Lin X."/>
            <person name="Liu X."/>
            <person name="Mattei B."/>
            <person name="McIntosh T.C."/>
            <person name="McLeod M.P."/>
            <person name="McPherson D."/>
            <person name="Merkulov G."/>
            <person name="Milshina N.V."/>
            <person name="Mobarry C."/>
            <person name="Morris J."/>
            <person name="Moshrefi A."/>
            <person name="Mount S.M."/>
            <person name="Moy M."/>
            <person name="Murphy B."/>
            <person name="Murphy L."/>
            <person name="Muzny D.M."/>
            <person name="Nelson D.L."/>
            <person name="Nelson D.R."/>
            <person name="Nelson K.A."/>
            <person name="Nixon K."/>
            <person name="Nusskern D.R."/>
            <person name="Pacleb J.M."/>
            <person name="Palazzolo M."/>
            <person name="Pittman G.S."/>
            <person name="Pan S."/>
            <person name="Pollard J."/>
            <person name="Puri V."/>
            <person name="Reese M.G."/>
            <person name="Reinert K."/>
            <person name="Remington K."/>
            <person name="Saunders R.D.C."/>
            <person name="Scheeler F."/>
            <person name="Shen H."/>
            <person name="Shue B.C."/>
            <person name="Siden-Kiamos I."/>
            <person name="Simpson M."/>
            <person name="Skupski M.P."/>
            <person name="Smith T.J."/>
            <person name="Spier E."/>
            <person name="Spradling A.C."/>
            <person name="Stapleton M."/>
            <person name="Strong R."/>
            <person name="Sun E."/>
            <person name="Svirskas R."/>
            <person name="Tector C."/>
            <person name="Turner R."/>
            <person name="Venter E."/>
            <person name="Wang A.H."/>
            <person name="Wang X."/>
            <person name="Wang Z.-Y."/>
            <person name="Wassarman D.A."/>
            <person name="Weinstock G.M."/>
            <person name="Weissenbach J."/>
            <person name="Williams S.M."/>
            <person name="Woodage T."/>
            <person name="Worley K.C."/>
            <person name="Wu D."/>
            <person name="Yang S."/>
            <person name="Yao Q.A."/>
            <person name="Ye J."/>
            <person name="Yeh R.-F."/>
            <person name="Zaveri J.S."/>
            <person name="Zhan M."/>
            <person name="Zhang G."/>
            <person name="Zhao Q."/>
            <person name="Zheng L."/>
            <person name="Zheng X.H."/>
            <person name="Zhong F.N."/>
            <person name="Zhong W."/>
            <person name="Zhou X."/>
            <person name="Zhu S.C."/>
            <person name="Zhu X."/>
            <person name="Smith H.O."/>
            <person name="Gibbs R.A."/>
            <person name="Myers E.W."/>
            <person name="Rubin G.M."/>
            <person name="Venter J.C."/>
        </authorList>
    </citation>
    <scope>NUCLEOTIDE SEQUENCE [LARGE SCALE GENOMIC DNA]</scope>
    <source>
        <strain>Berkeley</strain>
    </source>
</reference>
<reference key="4">
    <citation type="journal article" date="2002" name="Genome Biol.">
        <title>Annotation of the Drosophila melanogaster euchromatic genome: a systematic review.</title>
        <authorList>
            <person name="Misra S."/>
            <person name="Crosby M.A."/>
            <person name="Mungall C.J."/>
            <person name="Matthews B.B."/>
            <person name="Campbell K.S."/>
            <person name="Hradecky P."/>
            <person name="Huang Y."/>
            <person name="Kaminker J.S."/>
            <person name="Millburn G.H."/>
            <person name="Prochnik S.E."/>
            <person name="Smith C.D."/>
            <person name="Tupy J.L."/>
            <person name="Whitfield E.J."/>
            <person name="Bayraktaroglu L."/>
            <person name="Berman B.P."/>
            <person name="Bettencourt B.R."/>
            <person name="Celniker S.E."/>
            <person name="de Grey A.D.N.J."/>
            <person name="Drysdale R.A."/>
            <person name="Harris N.L."/>
            <person name="Richter J."/>
            <person name="Russo S."/>
            <person name="Schroeder A.J."/>
            <person name="Shu S.Q."/>
            <person name="Stapleton M."/>
            <person name="Yamada C."/>
            <person name="Ashburner M."/>
            <person name="Gelbart W.M."/>
            <person name="Rubin G.M."/>
            <person name="Lewis S.E."/>
        </authorList>
    </citation>
    <scope>GENOME REANNOTATION</scope>
    <source>
        <strain>Berkeley</strain>
    </source>
</reference>
<reference key="5">
    <citation type="journal article" date="1990" name="Nature">
        <title>Dependence of position-effect variegation in Drosophila on dose of a gene encoding an unusual zinc-finger protein.</title>
        <authorList>
            <person name="Reuter G."/>
            <person name="Giarre M."/>
            <person name="Farah J."/>
            <person name="Gausz J."/>
            <person name="Spierer A."/>
            <person name="Spierer P."/>
        </authorList>
    </citation>
    <scope>NUCLEOTIDE SEQUENCE OF 336-1250</scope>
</reference>
<reference key="6">
    <citation type="journal article" date="2002" name="EMBO J.">
        <title>Central role of Drosophila SU(VAR)3-9 in histone H3-K9 methylation and heterochromatic gene silencing.</title>
        <authorList>
            <person name="Schotta G."/>
            <person name="Ebert A."/>
            <person name="Krauss V."/>
            <person name="Fischer A."/>
            <person name="Hoffmann J."/>
            <person name="Rea S."/>
            <person name="Jenuwein T."/>
            <person name="Dorn R."/>
            <person name="Reuter G."/>
        </authorList>
    </citation>
    <scope>INTERACTION WITH SU(VAR)39</scope>
</reference>
<reference key="7">
    <citation type="journal article" date="2008" name="J. Proteome Res.">
        <title>Phosphoproteome analysis of Drosophila melanogaster embryos.</title>
        <authorList>
            <person name="Zhai B."/>
            <person name="Villen J."/>
            <person name="Beausoleil S.A."/>
            <person name="Mintseris J."/>
            <person name="Gygi S.P."/>
        </authorList>
    </citation>
    <scope>PHOSPHORYLATION [LARGE SCALE ANALYSIS] AT SER-165; SER-175; SER-176; SER-871; SER-873 AND SER-975</scope>
    <scope>IDENTIFICATION BY MASS SPECTROMETRY</scope>
    <source>
        <tissue>Embryo</tissue>
    </source>
</reference>